<gene>
    <name evidence="6" type="primary">SRT2</name>
    <name evidence="8" type="ordered locus">At5g09230</name>
    <name evidence="9" type="ORF">T5E8_30</name>
</gene>
<dbReference type="EC" id="2.3.1.286" evidence="1 2"/>
<dbReference type="EMBL" id="AL391712">
    <property type="protein sequence ID" value="CAC05449.1"/>
    <property type="status" value="ALT_SEQ"/>
    <property type="molecule type" value="Genomic_DNA"/>
</dbReference>
<dbReference type="EMBL" id="CP002688">
    <property type="protein sequence ID" value="AED91355.1"/>
    <property type="molecule type" value="Genomic_DNA"/>
</dbReference>
<dbReference type="EMBL" id="CP002688">
    <property type="protein sequence ID" value="AED91356.1"/>
    <property type="molecule type" value="Genomic_DNA"/>
</dbReference>
<dbReference type="EMBL" id="CP002688">
    <property type="protein sequence ID" value="AED91358.1"/>
    <property type="molecule type" value="Genomic_DNA"/>
</dbReference>
<dbReference type="EMBL" id="CP002688">
    <property type="protein sequence ID" value="AED91360.1"/>
    <property type="molecule type" value="Genomic_DNA"/>
</dbReference>
<dbReference type="EMBL" id="AY045873">
    <property type="protein sequence ID" value="AAK76547.1"/>
    <property type="molecule type" value="mRNA"/>
</dbReference>
<dbReference type="EMBL" id="AY122995">
    <property type="protein sequence ID" value="AAM67528.1"/>
    <property type="molecule type" value="mRNA"/>
</dbReference>
<dbReference type="EMBL" id="AK316908">
    <property type="protein sequence ID" value="BAH19614.1"/>
    <property type="molecule type" value="mRNA"/>
</dbReference>
<dbReference type="RefSeq" id="NP_001078550.1">
    <molecule id="Q94AQ6-2"/>
    <property type="nucleotide sequence ID" value="NM_001085081.2"/>
</dbReference>
<dbReference type="RefSeq" id="NP_568207.1">
    <molecule id="Q94AQ6-1"/>
    <property type="nucleotide sequence ID" value="NM_120959.4"/>
</dbReference>
<dbReference type="RefSeq" id="NP_850795.1">
    <molecule id="Q94AQ6-1"/>
    <property type="nucleotide sequence ID" value="NM_180464.4"/>
</dbReference>
<dbReference type="RefSeq" id="NP_974753.1">
    <molecule id="Q94AQ6-3"/>
    <property type="nucleotide sequence ID" value="NM_203024.3"/>
</dbReference>
<dbReference type="SMR" id="Q94AQ6"/>
<dbReference type="BioGRID" id="16060">
    <property type="interactions" value="15"/>
</dbReference>
<dbReference type="FunCoup" id="Q94AQ6">
    <property type="interactions" value="2612"/>
</dbReference>
<dbReference type="STRING" id="3702.Q94AQ6"/>
<dbReference type="PaxDb" id="3702-AT5G09230.7"/>
<dbReference type="ProteomicsDB" id="234565">
    <molecule id="Q94AQ6-1"/>
</dbReference>
<dbReference type="EnsemblPlants" id="AT5G09230.1">
    <molecule id="Q94AQ6-1"/>
    <property type="protein sequence ID" value="AT5G09230.1"/>
    <property type="gene ID" value="AT5G09230"/>
</dbReference>
<dbReference type="EnsemblPlants" id="AT5G09230.2">
    <molecule id="Q94AQ6-1"/>
    <property type="protein sequence ID" value="AT5G09230.2"/>
    <property type="gene ID" value="AT5G09230"/>
</dbReference>
<dbReference type="EnsemblPlants" id="AT5G09230.5">
    <molecule id="Q94AQ6-3"/>
    <property type="protein sequence ID" value="AT5G09230.5"/>
    <property type="gene ID" value="AT5G09230"/>
</dbReference>
<dbReference type="EnsemblPlants" id="AT5G09230.7">
    <molecule id="Q94AQ6-2"/>
    <property type="protein sequence ID" value="AT5G09230.7"/>
    <property type="gene ID" value="AT5G09230"/>
</dbReference>
<dbReference type="GeneID" id="830782"/>
<dbReference type="Gramene" id="AT5G09230.1">
    <molecule id="Q94AQ6-1"/>
    <property type="protein sequence ID" value="AT5G09230.1"/>
    <property type="gene ID" value="AT5G09230"/>
</dbReference>
<dbReference type="Gramene" id="AT5G09230.2">
    <molecule id="Q94AQ6-1"/>
    <property type="protein sequence ID" value="AT5G09230.2"/>
    <property type="gene ID" value="AT5G09230"/>
</dbReference>
<dbReference type="Gramene" id="AT5G09230.5">
    <molecule id="Q94AQ6-3"/>
    <property type="protein sequence ID" value="AT5G09230.5"/>
    <property type="gene ID" value="AT5G09230"/>
</dbReference>
<dbReference type="Gramene" id="AT5G09230.7">
    <molecule id="Q94AQ6-2"/>
    <property type="protein sequence ID" value="AT5G09230.7"/>
    <property type="gene ID" value="AT5G09230"/>
</dbReference>
<dbReference type="KEGG" id="ath:AT5G09230"/>
<dbReference type="Araport" id="AT5G09230"/>
<dbReference type="TAIR" id="AT5G09230">
    <property type="gene designation" value="SRT2"/>
</dbReference>
<dbReference type="eggNOG" id="KOG2683">
    <property type="taxonomic scope" value="Eukaryota"/>
</dbReference>
<dbReference type="InParanoid" id="Q94AQ6"/>
<dbReference type="OMA" id="RRHYWAR"/>
<dbReference type="PhylomeDB" id="Q94AQ6"/>
<dbReference type="PRO" id="PR:Q94AQ6"/>
<dbReference type="Proteomes" id="UP000006548">
    <property type="component" value="Chromosome 5"/>
</dbReference>
<dbReference type="ExpressionAtlas" id="Q94AQ6">
    <property type="expression patterns" value="baseline and differential"/>
</dbReference>
<dbReference type="GO" id="GO:0005759">
    <property type="term" value="C:mitochondrial matrix"/>
    <property type="evidence" value="ECO:0000314"/>
    <property type="project" value="TAIR"/>
</dbReference>
<dbReference type="GO" id="GO:0005634">
    <property type="term" value="C:nucleus"/>
    <property type="evidence" value="ECO:0000314"/>
    <property type="project" value="TAIR"/>
</dbReference>
<dbReference type="GO" id="GO:0019213">
    <property type="term" value="F:deacetylase activity"/>
    <property type="evidence" value="ECO:0000314"/>
    <property type="project" value="TAIR"/>
</dbReference>
<dbReference type="GO" id="GO:0070403">
    <property type="term" value="F:NAD+ binding"/>
    <property type="evidence" value="ECO:0007669"/>
    <property type="project" value="UniProtKB-UniRule"/>
</dbReference>
<dbReference type="GO" id="GO:0034979">
    <property type="term" value="F:NAD-dependent protein lysine deacetylase activity"/>
    <property type="evidence" value="ECO:0007669"/>
    <property type="project" value="UniProtKB-UniRule"/>
</dbReference>
<dbReference type="GO" id="GO:0008270">
    <property type="term" value="F:zinc ion binding"/>
    <property type="evidence" value="ECO:0007669"/>
    <property type="project" value="UniProtKB-UniRule"/>
</dbReference>
<dbReference type="GO" id="GO:0042742">
    <property type="term" value="P:defense response to bacterium"/>
    <property type="evidence" value="ECO:0000315"/>
    <property type="project" value="TAIR"/>
</dbReference>
<dbReference type="GO" id="GO:0009873">
    <property type="term" value="P:ethylene-activated signaling pathway"/>
    <property type="evidence" value="ECO:0000316"/>
    <property type="project" value="TAIR"/>
</dbReference>
<dbReference type="GO" id="GO:0031348">
    <property type="term" value="P:negative regulation of defense response"/>
    <property type="evidence" value="ECO:0000315"/>
    <property type="project" value="TAIR"/>
</dbReference>
<dbReference type="CDD" id="cd01409">
    <property type="entry name" value="SIRT4"/>
    <property type="match status" value="1"/>
</dbReference>
<dbReference type="Gene3D" id="3.30.1600.10">
    <property type="entry name" value="SIR2/SIRT2 'Small Domain"/>
    <property type="match status" value="1"/>
</dbReference>
<dbReference type="Gene3D" id="3.40.50.1220">
    <property type="entry name" value="TPP-binding domain"/>
    <property type="match status" value="1"/>
</dbReference>
<dbReference type="HAMAP" id="MF_01967">
    <property type="entry name" value="Sirtuin_ClassII"/>
    <property type="match status" value="1"/>
</dbReference>
<dbReference type="InterPro" id="IPR029035">
    <property type="entry name" value="DHS-like_NAD/FAD-binding_dom"/>
</dbReference>
<dbReference type="InterPro" id="IPR050134">
    <property type="entry name" value="NAD-dep_sirtuin_deacylases"/>
</dbReference>
<dbReference type="InterPro" id="IPR003000">
    <property type="entry name" value="Sirtuin"/>
</dbReference>
<dbReference type="InterPro" id="IPR026591">
    <property type="entry name" value="Sirtuin_cat_small_dom_sf"/>
</dbReference>
<dbReference type="InterPro" id="IPR026587">
    <property type="entry name" value="Sirtuin_class_II"/>
</dbReference>
<dbReference type="InterPro" id="IPR026590">
    <property type="entry name" value="Ssirtuin_cat_dom"/>
</dbReference>
<dbReference type="NCBIfam" id="NF003738">
    <property type="entry name" value="PRK05333.1"/>
    <property type="match status" value="1"/>
</dbReference>
<dbReference type="PANTHER" id="PTHR11085">
    <property type="entry name" value="NAD-DEPENDENT PROTEIN DEACYLASE SIRTUIN-5, MITOCHONDRIAL-RELATED"/>
    <property type="match status" value="1"/>
</dbReference>
<dbReference type="PANTHER" id="PTHR11085:SF10">
    <property type="entry name" value="NAD-DEPENDENT PROTEIN DEACYLASE SIRTUIN-5, MITOCHONDRIAL-RELATED"/>
    <property type="match status" value="1"/>
</dbReference>
<dbReference type="Pfam" id="PF02146">
    <property type="entry name" value="SIR2"/>
    <property type="match status" value="1"/>
</dbReference>
<dbReference type="SUPFAM" id="SSF52467">
    <property type="entry name" value="DHS-like NAD/FAD-binding domain"/>
    <property type="match status" value="1"/>
</dbReference>
<dbReference type="PROSITE" id="PS50305">
    <property type="entry name" value="SIRTUIN"/>
    <property type="match status" value="1"/>
</dbReference>
<evidence type="ECO:0000255" key="1">
    <source>
        <dbReference type="HAMAP-Rule" id="MF_03161"/>
    </source>
</evidence>
<evidence type="ECO:0000255" key="2">
    <source>
        <dbReference type="PROSITE-ProRule" id="PRU00236"/>
    </source>
</evidence>
<evidence type="ECO:0000269" key="3">
    <source>
    </source>
</evidence>
<evidence type="ECO:0000269" key="4">
    <source>
    </source>
</evidence>
<evidence type="ECO:0000303" key="5">
    <source>
    </source>
</evidence>
<evidence type="ECO:0000303" key="6">
    <source>
    </source>
</evidence>
<evidence type="ECO:0000305" key="7"/>
<evidence type="ECO:0000312" key="8">
    <source>
        <dbReference type="Araport" id="AT5G09230"/>
    </source>
</evidence>
<evidence type="ECO:0000312" key="9">
    <source>
        <dbReference type="EMBL" id="CAC05449.1"/>
    </source>
</evidence>
<reference key="1">
    <citation type="journal article" date="2000" name="Nature">
        <title>Sequence and analysis of chromosome 5 of the plant Arabidopsis thaliana.</title>
        <authorList>
            <person name="Tabata S."/>
            <person name="Kaneko T."/>
            <person name="Nakamura Y."/>
            <person name="Kotani H."/>
            <person name="Kato T."/>
            <person name="Asamizu E."/>
            <person name="Miyajima N."/>
            <person name="Sasamoto S."/>
            <person name="Kimura T."/>
            <person name="Hosouchi T."/>
            <person name="Kawashima K."/>
            <person name="Kohara M."/>
            <person name="Matsumoto M."/>
            <person name="Matsuno A."/>
            <person name="Muraki A."/>
            <person name="Nakayama S."/>
            <person name="Nakazaki N."/>
            <person name="Naruo K."/>
            <person name="Okumura S."/>
            <person name="Shinpo S."/>
            <person name="Takeuchi C."/>
            <person name="Wada T."/>
            <person name="Watanabe A."/>
            <person name="Yamada M."/>
            <person name="Yasuda M."/>
            <person name="Sato S."/>
            <person name="de la Bastide M."/>
            <person name="Huang E."/>
            <person name="Spiegel L."/>
            <person name="Gnoj L."/>
            <person name="O'Shaughnessy A."/>
            <person name="Preston R."/>
            <person name="Habermann K."/>
            <person name="Murray J."/>
            <person name="Johnson D."/>
            <person name="Rohlfing T."/>
            <person name="Nelson J."/>
            <person name="Stoneking T."/>
            <person name="Pepin K."/>
            <person name="Spieth J."/>
            <person name="Sekhon M."/>
            <person name="Armstrong J."/>
            <person name="Becker M."/>
            <person name="Belter E."/>
            <person name="Cordum H."/>
            <person name="Cordes M."/>
            <person name="Courtney L."/>
            <person name="Courtney W."/>
            <person name="Dante M."/>
            <person name="Du H."/>
            <person name="Edwards J."/>
            <person name="Fryman J."/>
            <person name="Haakensen B."/>
            <person name="Lamar E."/>
            <person name="Latreille P."/>
            <person name="Leonard S."/>
            <person name="Meyer R."/>
            <person name="Mulvaney E."/>
            <person name="Ozersky P."/>
            <person name="Riley A."/>
            <person name="Strowmatt C."/>
            <person name="Wagner-McPherson C."/>
            <person name="Wollam A."/>
            <person name="Yoakum M."/>
            <person name="Bell M."/>
            <person name="Dedhia N."/>
            <person name="Parnell L."/>
            <person name="Shah R."/>
            <person name="Rodriguez M."/>
            <person name="Hoon See L."/>
            <person name="Vil D."/>
            <person name="Baker J."/>
            <person name="Kirchoff K."/>
            <person name="Toth K."/>
            <person name="King L."/>
            <person name="Bahret A."/>
            <person name="Miller B."/>
            <person name="Marra M.A."/>
            <person name="Martienssen R."/>
            <person name="McCombie W.R."/>
            <person name="Wilson R.K."/>
            <person name="Murphy G."/>
            <person name="Bancroft I."/>
            <person name="Volckaert G."/>
            <person name="Wambutt R."/>
            <person name="Duesterhoeft A."/>
            <person name="Stiekema W."/>
            <person name="Pohl T."/>
            <person name="Entian K.-D."/>
            <person name="Terryn N."/>
            <person name="Hartley N."/>
            <person name="Bent E."/>
            <person name="Johnson S."/>
            <person name="Langham S.-A."/>
            <person name="McCullagh B."/>
            <person name="Robben J."/>
            <person name="Grymonprez B."/>
            <person name="Zimmermann W."/>
            <person name="Ramsperger U."/>
            <person name="Wedler H."/>
            <person name="Balke K."/>
            <person name="Wedler E."/>
            <person name="Peters S."/>
            <person name="van Staveren M."/>
            <person name="Dirkse W."/>
            <person name="Mooijman P."/>
            <person name="Klein Lankhorst R."/>
            <person name="Weitzenegger T."/>
            <person name="Bothe G."/>
            <person name="Rose M."/>
            <person name="Hauf J."/>
            <person name="Berneiser S."/>
            <person name="Hempel S."/>
            <person name="Feldpausch M."/>
            <person name="Lamberth S."/>
            <person name="Villarroel R."/>
            <person name="Gielen J."/>
            <person name="Ardiles W."/>
            <person name="Bents O."/>
            <person name="Lemcke K."/>
            <person name="Kolesov G."/>
            <person name="Mayer K.F.X."/>
            <person name="Rudd S."/>
            <person name="Schoof H."/>
            <person name="Schueller C."/>
            <person name="Zaccaria P."/>
            <person name="Mewes H.-W."/>
            <person name="Bevan M."/>
            <person name="Fransz P.F."/>
        </authorList>
    </citation>
    <scope>NUCLEOTIDE SEQUENCE [LARGE SCALE GENOMIC DNA]</scope>
    <source>
        <strain>cv. Columbia</strain>
    </source>
</reference>
<reference key="2">
    <citation type="journal article" date="2017" name="Plant J.">
        <title>Araport11: a complete reannotation of the Arabidopsis thaliana reference genome.</title>
        <authorList>
            <person name="Cheng C.Y."/>
            <person name="Krishnakumar V."/>
            <person name="Chan A.P."/>
            <person name="Thibaud-Nissen F."/>
            <person name="Schobel S."/>
            <person name="Town C.D."/>
        </authorList>
    </citation>
    <scope>GENOME REANNOTATION</scope>
    <source>
        <strain>cv. Columbia</strain>
    </source>
</reference>
<reference key="3">
    <citation type="journal article" date="2003" name="Science">
        <title>Empirical analysis of transcriptional activity in the Arabidopsis genome.</title>
        <authorList>
            <person name="Yamada K."/>
            <person name="Lim J."/>
            <person name="Dale J.M."/>
            <person name="Chen H."/>
            <person name="Shinn P."/>
            <person name="Palm C.J."/>
            <person name="Southwick A.M."/>
            <person name="Wu H.C."/>
            <person name="Kim C.J."/>
            <person name="Nguyen M."/>
            <person name="Pham P.K."/>
            <person name="Cheuk R.F."/>
            <person name="Karlin-Newmann G."/>
            <person name="Liu S.X."/>
            <person name="Lam B."/>
            <person name="Sakano H."/>
            <person name="Wu T."/>
            <person name="Yu G."/>
            <person name="Miranda M."/>
            <person name="Quach H.L."/>
            <person name="Tripp M."/>
            <person name="Chang C.H."/>
            <person name="Lee J.M."/>
            <person name="Toriumi M.J."/>
            <person name="Chan M.M."/>
            <person name="Tang C.C."/>
            <person name="Onodera C.S."/>
            <person name="Deng J.M."/>
            <person name="Akiyama K."/>
            <person name="Ansari Y."/>
            <person name="Arakawa T."/>
            <person name="Banh J."/>
            <person name="Banno F."/>
            <person name="Bowser L."/>
            <person name="Brooks S.Y."/>
            <person name="Carninci P."/>
            <person name="Chao Q."/>
            <person name="Choy N."/>
            <person name="Enju A."/>
            <person name="Goldsmith A.D."/>
            <person name="Gurjal M."/>
            <person name="Hansen N.F."/>
            <person name="Hayashizaki Y."/>
            <person name="Johnson-Hopson C."/>
            <person name="Hsuan V.W."/>
            <person name="Iida K."/>
            <person name="Karnes M."/>
            <person name="Khan S."/>
            <person name="Koesema E."/>
            <person name="Ishida J."/>
            <person name="Jiang P.X."/>
            <person name="Jones T."/>
            <person name="Kawai J."/>
            <person name="Kamiya A."/>
            <person name="Meyers C."/>
            <person name="Nakajima M."/>
            <person name="Narusaka M."/>
            <person name="Seki M."/>
            <person name="Sakurai T."/>
            <person name="Satou M."/>
            <person name="Tamse R."/>
            <person name="Vaysberg M."/>
            <person name="Wallender E.K."/>
            <person name="Wong C."/>
            <person name="Yamamura Y."/>
            <person name="Yuan S."/>
            <person name="Shinozaki K."/>
            <person name="Davis R.W."/>
            <person name="Theologis A."/>
            <person name="Ecker J.R."/>
        </authorList>
    </citation>
    <scope>NUCLEOTIDE SEQUENCE [LARGE SCALE MRNA] (ISOFORM 1)</scope>
    <source>
        <strain>cv. Columbia</strain>
    </source>
</reference>
<reference key="4">
    <citation type="journal article" date="2009" name="DNA Res.">
        <title>Analysis of multiple occurrences of alternative splicing events in Arabidopsis thaliana using novel sequenced full-length cDNAs.</title>
        <authorList>
            <person name="Iida K."/>
            <person name="Fukami-Kobayashi K."/>
            <person name="Toyoda A."/>
            <person name="Sakaki Y."/>
            <person name="Kobayashi M."/>
            <person name="Seki M."/>
            <person name="Shinozaki K."/>
        </authorList>
    </citation>
    <scope>NUCLEOTIDE SEQUENCE [LARGE SCALE MRNA] (ISOFORM 3)</scope>
    <source>
        <strain>cv. Columbia</strain>
    </source>
</reference>
<reference key="5">
    <citation type="journal article" date="2010" name="Plant Cell Physiol.">
        <title>Arabidopsis putative deacetylase AtSRT2 regulates basal defense by suppressing PAD4, EDS5 and SID2 expression.</title>
        <authorList>
            <person name="Wang C."/>
            <person name="Gao F."/>
            <person name="Wu J."/>
            <person name="Dai J."/>
            <person name="Wei C."/>
            <person name="Li Y."/>
        </authorList>
    </citation>
    <scope>FUNCTION</scope>
    <scope>SUBCELLULAR LOCATION</scope>
    <scope>INDUCTION</scope>
</reference>
<reference key="6">
    <citation type="journal article" date="2018" name="Plant Cell">
        <title>Histone deacetylases SRT1 and SRT2 interact with ENAP1 to mediate ethylene-induced transcriptional repression.</title>
        <authorList>
            <person name="Zhang F."/>
            <person name="Wang L."/>
            <person name="Ko E.E."/>
            <person name="Shao K."/>
            <person name="Qiao H."/>
        </authorList>
    </citation>
    <scope>FUNCTION</scope>
    <scope>DISRUPTION PHENOTYPE</scope>
    <scope>INTERACTION WITH ENAP1</scope>
    <scope>SUBUNIT</scope>
    <source>
        <strain>cv. Columbia</strain>
    </source>
</reference>
<feature type="transit peptide" description="Mitochondrion" evidence="1">
    <location>
        <begin position="1"/>
        <end position="47"/>
    </location>
</feature>
<feature type="chain" id="PRO_0000417348" description="NAD-dependent protein deacylase SRT2">
    <location>
        <begin position="48"/>
        <end position="373"/>
    </location>
</feature>
<feature type="domain" description="Deacetylase sirtuin-type" evidence="2">
    <location>
        <begin position="75"/>
        <end position="373"/>
    </location>
</feature>
<feature type="active site" description="Proton acceptor" evidence="2">
    <location>
        <position position="196"/>
    </location>
</feature>
<feature type="binding site" evidence="1">
    <location>
        <begin position="100"/>
        <end position="120"/>
    </location>
    <ligand>
        <name>NAD(+)</name>
        <dbReference type="ChEBI" id="CHEBI:57540"/>
    </ligand>
</feature>
<feature type="binding site" evidence="1">
    <location>
        <begin position="179"/>
        <end position="182"/>
    </location>
    <ligand>
        <name>NAD(+)</name>
        <dbReference type="ChEBI" id="CHEBI:57540"/>
    </ligand>
</feature>
<feature type="binding site" evidence="1">
    <location>
        <position position="204"/>
    </location>
    <ligand>
        <name>Zn(2+)</name>
        <dbReference type="ChEBI" id="CHEBI:29105"/>
    </ligand>
</feature>
<feature type="binding site" evidence="1">
    <location>
        <position position="207"/>
    </location>
    <ligand>
        <name>Zn(2+)</name>
        <dbReference type="ChEBI" id="CHEBI:29105"/>
    </ligand>
</feature>
<feature type="binding site" evidence="1">
    <location>
        <position position="271"/>
    </location>
    <ligand>
        <name>Zn(2+)</name>
        <dbReference type="ChEBI" id="CHEBI:29105"/>
    </ligand>
</feature>
<feature type="binding site" evidence="1">
    <location>
        <position position="274"/>
    </location>
    <ligand>
        <name>Zn(2+)</name>
        <dbReference type="ChEBI" id="CHEBI:29105"/>
    </ligand>
</feature>
<feature type="binding site" evidence="1">
    <location>
        <begin position="311"/>
        <end position="313"/>
    </location>
    <ligand>
        <name>NAD(+)</name>
        <dbReference type="ChEBI" id="CHEBI:57540"/>
    </ligand>
</feature>
<feature type="binding site" evidence="1">
    <location>
        <begin position="337"/>
        <end position="339"/>
    </location>
    <ligand>
        <name>NAD(+)</name>
        <dbReference type="ChEBI" id="CHEBI:57540"/>
    </ligand>
</feature>
<feature type="binding site" evidence="1">
    <location>
        <position position="355"/>
    </location>
    <ligand>
        <name>NAD(+)</name>
        <dbReference type="ChEBI" id="CHEBI:57540"/>
    </ligand>
</feature>
<feature type="splice variant" id="VSP_043536" description="In isoform 3." evidence="5">
    <location>
        <begin position="1"/>
        <end position="19"/>
    </location>
</feature>
<feature type="splice variant" id="VSP_043537" description="In isoform 2." evidence="7">
    <original>M</original>
    <variation>MLSM</variation>
    <location>
        <position position="1"/>
    </location>
</feature>
<accession>Q94AQ6</accession>
<accession>B9DFU7</accession>
<accession>F4KCI0</accession>
<accession>Q9FY91</accession>
<sequence>MNMRRVFGGVSTDLFPSRSMYRPLQSGGNLVMLFKGCRRFVRTTCRVSIPGGSLGNESKAPPRFLRDRKIVPDADPPNMEDIHKLYRLFEQSSRLTILTGAGVSTECGIPDYRSPNGAYSSGFKPITHQEFTRSSRARRRYWARSYAGWRRFTAAQPGPAHTALASLEKAGRINFMITQNVDRLHHRAGSDPLELHGTVYTVMCLECGFSFPRDLFQDQLKAINPKWAEAIESIDHGDPGSEKSFGMKQRPDGDIEIDEKFWEEGFHIPVCEKCKGVLKPDVIFFGDNIPKERATQAMEVAKQSDAFLVLGSSLMTMSAFRLCRAAHEAGAMTAIVNIGETRADDIVPLKINARVGEILHRVLDVGSLSVPAL</sequence>
<name>SIR4_ARATH</name>
<proteinExistence type="evidence at protein level"/>
<comment type="function">
    <text evidence="1 3 4">NAD-dependent protein deacylase. Catalyzes the NAD-dependent hydrolysis of acyl groups from lysine residues (By similarity). Involved in responses to ethylene leading to the transcriptional repression of some ethylene-responsive genes via the regulation of histone acetylation H3K9Ac (PubMed:29298835). Negatively regulates plant basal defense against plant pathogens, possibly by suppressing salicylic acid biosynthesis (PubMed:20573705).</text>
</comment>
<comment type="catalytic activity">
    <reaction evidence="1">
        <text>N(6)-acetyl-L-lysyl-[protein] + NAD(+) + H2O = 2''-O-acetyl-ADP-D-ribose + nicotinamide + L-lysyl-[protein]</text>
        <dbReference type="Rhea" id="RHEA:43636"/>
        <dbReference type="Rhea" id="RHEA-COMP:9752"/>
        <dbReference type="Rhea" id="RHEA-COMP:10731"/>
        <dbReference type="ChEBI" id="CHEBI:15377"/>
        <dbReference type="ChEBI" id="CHEBI:17154"/>
        <dbReference type="ChEBI" id="CHEBI:29969"/>
        <dbReference type="ChEBI" id="CHEBI:57540"/>
        <dbReference type="ChEBI" id="CHEBI:61930"/>
        <dbReference type="ChEBI" id="CHEBI:83767"/>
        <dbReference type="EC" id="2.3.1.286"/>
    </reaction>
</comment>
<comment type="cofactor">
    <cofactor evidence="1">
        <name>Zn(2+)</name>
        <dbReference type="ChEBI" id="CHEBI:29105"/>
    </cofactor>
    <text evidence="1">Binds 1 zinc ion per subunit.</text>
</comment>
<comment type="subunit">
    <text evidence="4">Binds to the promoter region of genes influenced by ethylene (PubMed:29298835). Interacts with ENAP1; this interaction is enhanced in the presence of ethylene (PubMed:29298835).</text>
</comment>
<comment type="subcellular location">
    <subcellularLocation>
        <location evidence="1">Mitochondrion matrix</location>
    </subcellularLocation>
    <subcellularLocation>
        <location evidence="3">Nucleus</location>
    </subcellularLocation>
</comment>
<comment type="alternative products">
    <event type="alternative splicing"/>
    <isoform>
        <id>Q94AQ6-1</id>
        <name>1</name>
        <sequence type="displayed"/>
    </isoform>
    <isoform>
        <id>Q94AQ6-2</id>
        <name>2</name>
        <sequence type="described" ref="VSP_043537"/>
    </isoform>
    <isoform>
        <id>Q94AQ6-3</id>
        <name>3</name>
        <sequence type="described" ref="VSP_043536"/>
    </isoform>
</comment>
<comment type="induction">
    <text evidence="3">Repressed by pathogen infection.</text>
</comment>
<comment type="disruption phenotype">
    <text evidence="4">Reduced ethylene sensitivity in the double mutant srt1 srt2.</text>
</comment>
<comment type="similarity">
    <text evidence="1">Belongs to the sirtuin family. Class II subfamily.</text>
</comment>
<comment type="sequence caution" evidence="7">
    <conflict type="erroneous gene model prediction">
        <sequence resource="EMBL-CDS" id="CAC05449"/>
    </conflict>
</comment>
<keyword id="KW-0025">Alternative splicing</keyword>
<keyword id="KW-0936">Ethylene signaling pathway</keyword>
<keyword id="KW-0479">Metal-binding</keyword>
<keyword id="KW-0496">Mitochondrion</keyword>
<keyword id="KW-0520">NAD</keyword>
<keyword id="KW-0539">Nucleus</keyword>
<keyword id="KW-1185">Reference proteome</keyword>
<keyword id="KW-0808">Transferase</keyword>
<keyword id="KW-0809">Transit peptide</keyword>
<keyword id="KW-0862">Zinc</keyword>
<organism>
    <name type="scientific">Arabidopsis thaliana</name>
    <name type="common">Mouse-ear cress</name>
    <dbReference type="NCBI Taxonomy" id="3702"/>
    <lineage>
        <taxon>Eukaryota</taxon>
        <taxon>Viridiplantae</taxon>
        <taxon>Streptophyta</taxon>
        <taxon>Embryophyta</taxon>
        <taxon>Tracheophyta</taxon>
        <taxon>Spermatophyta</taxon>
        <taxon>Magnoliopsida</taxon>
        <taxon>eudicotyledons</taxon>
        <taxon>Gunneridae</taxon>
        <taxon>Pentapetalae</taxon>
        <taxon>rosids</taxon>
        <taxon>malvids</taxon>
        <taxon>Brassicales</taxon>
        <taxon>Brassicaceae</taxon>
        <taxon>Camelineae</taxon>
        <taxon>Arabidopsis</taxon>
    </lineage>
</organism>
<protein>
    <recommendedName>
        <fullName evidence="1">NAD-dependent protein deacylase SRT2</fullName>
        <ecNumber evidence="1 2">2.3.1.286</ecNumber>
    </recommendedName>
    <alternativeName>
        <fullName evidence="1">Regulatory protein SIR2 homolog 2</fullName>
    </alternativeName>
</protein>